<evidence type="ECO:0000269" key="1">
    <source>
    </source>
</evidence>
<evidence type="ECO:0000269" key="2">
    <source>
    </source>
</evidence>
<evidence type="ECO:0000269" key="3">
    <source>
    </source>
</evidence>
<evidence type="ECO:0000269" key="4">
    <source>
    </source>
</evidence>
<evidence type="ECO:0000269" key="5">
    <source>
    </source>
</evidence>
<evidence type="ECO:0000269" key="6">
    <source>
    </source>
</evidence>
<evidence type="ECO:0000303" key="7">
    <source>
    </source>
</evidence>
<evidence type="ECO:0000303" key="8">
    <source>
    </source>
</evidence>
<evidence type="ECO:0000303" key="9">
    <source>
    </source>
</evidence>
<evidence type="ECO:0000303" key="10">
    <source>
    </source>
</evidence>
<evidence type="ECO:0000305" key="11"/>
<evidence type="ECO:0000305" key="12">
    <source>
    </source>
</evidence>
<evidence type="ECO:0007829" key="13">
    <source>
        <dbReference type="PDB" id="1EGY"/>
    </source>
</evidence>
<evidence type="ECO:0007829" key="14">
    <source>
        <dbReference type="PDB" id="1EUP"/>
    </source>
</evidence>
<evidence type="ECO:0007829" key="15">
    <source>
        <dbReference type="PDB" id="1JIO"/>
    </source>
</evidence>
<evidence type="ECO:0007829" key="16">
    <source>
        <dbReference type="PDB" id="1Z8O"/>
    </source>
</evidence>
<protein>
    <recommendedName>
        <fullName evidence="9">6-deoxyerythronolide B hydroxylase</fullName>
        <shortName evidence="9">6-DEB hydroxylase</shortName>
        <ecNumber evidence="4 5">1.14.15.35</ecNumber>
    </recommendedName>
    <alternativeName>
        <fullName>CYPCVIIA1</fullName>
    </alternativeName>
    <alternativeName>
        <fullName>Cytochrome P450 107A1</fullName>
    </alternativeName>
    <alternativeName>
        <fullName evidence="7 8 10">Cytochrome P450eryF</fullName>
    </alternativeName>
    <alternativeName>
        <fullName>Erythromycin A biosynthesis hydroxylase</fullName>
    </alternativeName>
</protein>
<organism>
    <name type="scientific">Saccharopolyspora erythraea (strain ATCC 11635 / DSM 40517 / JCM 4748 / NBRC 13426 / NCIMB 8594 / NRRL 2338)</name>
    <dbReference type="NCBI Taxonomy" id="405948"/>
    <lineage>
        <taxon>Bacteria</taxon>
        <taxon>Bacillati</taxon>
        <taxon>Actinomycetota</taxon>
        <taxon>Actinomycetes</taxon>
        <taxon>Pseudonocardiales</taxon>
        <taxon>Pseudonocardiaceae</taxon>
        <taxon>Saccharopolyspora</taxon>
    </lineage>
</organism>
<feature type="chain" id="PRO_0000052220" description="6-deoxyerythronolide B hydroxylase">
    <location>
        <begin position="1"/>
        <end position="404"/>
    </location>
</feature>
<feature type="binding site" description="axial binding residue" evidence="1 2 3 6">
    <location>
        <position position="351"/>
    </location>
    <ligand>
        <name>heme</name>
        <dbReference type="ChEBI" id="CHEBI:30413"/>
    </ligand>
    <ligandPart>
        <name>Fe</name>
        <dbReference type="ChEBI" id="CHEBI:18248"/>
    </ligandPart>
</feature>
<feature type="sequence conflict" description="In Ref. 1; CAA42927." evidence="11" ref="1">
    <original>P</original>
    <variation>PDQ</variation>
    <location>
        <position position="261"/>
    </location>
</feature>
<feature type="sequence conflict" description="In Ref. 1; CAA42927." evidence="11" ref="1">
    <original>G</original>
    <variation>R</variation>
    <location>
        <position position="302"/>
    </location>
</feature>
<feature type="helix" evidence="16">
    <location>
        <begin position="10"/>
        <end position="12"/>
    </location>
</feature>
<feature type="helix" evidence="16">
    <location>
        <begin position="16"/>
        <end position="26"/>
    </location>
</feature>
<feature type="strand" evidence="16">
    <location>
        <begin position="28"/>
        <end position="34"/>
    </location>
</feature>
<feature type="strand" evidence="16">
    <location>
        <begin position="37"/>
        <end position="42"/>
    </location>
</feature>
<feature type="helix" evidence="16">
    <location>
        <begin position="45"/>
        <end position="53"/>
    </location>
</feature>
<feature type="helix" evidence="16">
    <location>
        <begin position="73"/>
        <end position="75"/>
    </location>
</feature>
<feature type="helix" evidence="16">
    <location>
        <begin position="80"/>
        <end position="86"/>
    </location>
</feature>
<feature type="strand" evidence="16">
    <location>
        <begin position="87"/>
        <end position="89"/>
    </location>
</feature>
<feature type="helix" evidence="16">
    <location>
        <begin position="90"/>
        <end position="92"/>
    </location>
</feature>
<feature type="helix" evidence="16">
    <location>
        <begin position="97"/>
        <end position="106"/>
    </location>
</feature>
<feature type="helix" evidence="16">
    <location>
        <begin position="111"/>
        <end position="116"/>
    </location>
</feature>
<feature type="helix" evidence="16">
    <location>
        <begin position="118"/>
        <end position="130"/>
    </location>
</feature>
<feature type="strand" evidence="16">
    <location>
        <begin position="134"/>
        <end position="139"/>
    </location>
</feature>
<feature type="helix" evidence="16">
    <location>
        <begin position="140"/>
        <end position="143"/>
    </location>
</feature>
<feature type="turn" evidence="16">
    <location>
        <begin position="144"/>
        <end position="146"/>
    </location>
</feature>
<feature type="helix" evidence="16">
    <location>
        <begin position="147"/>
        <end position="156"/>
    </location>
</feature>
<feature type="helix" evidence="16">
    <location>
        <begin position="161"/>
        <end position="163"/>
    </location>
</feature>
<feature type="turn" evidence="15">
    <location>
        <begin position="164"/>
        <end position="166"/>
    </location>
</feature>
<feature type="helix" evidence="16">
    <location>
        <begin position="167"/>
        <end position="175"/>
    </location>
</feature>
<feature type="helix" evidence="16">
    <location>
        <begin position="179"/>
        <end position="181"/>
    </location>
</feature>
<feature type="helix" evidence="16">
    <location>
        <begin position="182"/>
        <end position="205"/>
    </location>
</feature>
<feature type="helix" evidence="16">
    <location>
        <begin position="211"/>
        <end position="217"/>
    </location>
</feature>
<feature type="turn" evidence="16">
    <location>
        <begin position="221"/>
        <end position="223"/>
    </location>
</feature>
<feature type="helix" evidence="16">
    <location>
        <begin position="228"/>
        <end position="259"/>
    </location>
</feature>
<feature type="helix" evidence="16">
    <location>
        <begin position="261"/>
        <end position="269"/>
    </location>
</feature>
<feature type="helix" evidence="16">
    <location>
        <begin position="271"/>
        <end position="273"/>
    </location>
</feature>
<feature type="helix" evidence="16">
    <location>
        <begin position="274"/>
        <end position="284"/>
    </location>
</feature>
<feature type="strand" evidence="16">
    <location>
        <begin position="291"/>
        <end position="297"/>
    </location>
</feature>
<feature type="strand" evidence="16">
    <location>
        <begin position="299"/>
        <end position="301"/>
    </location>
</feature>
<feature type="strand" evidence="16">
    <location>
        <begin position="304"/>
        <end position="306"/>
    </location>
</feature>
<feature type="strand" evidence="16">
    <location>
        <begin position="311"/>
        <end position="314"/>
    </location>
</feature>
<feature type="helix" evidence="16">
    <location>
        <begin position="316"/>
        <end position="319"/>
    </location>
</feature>
<feature type="turn" evidence="16">
    <location>
        <begin position="323"/>
        <end position="325"/>
    </location>
</feature>
<feature type="strand" evidence="16">
    <location>
        <begin position="326"/>
        <end position="328"/>
    </location>
</feature>
<feature type="strand" evidence="13">
    <location>
        <begin position="334"/>
        <end position="336"/>
    </location>
</feature>
<feature type="strand" evidence="13">
    <location>
        <begin position="342"/>
        <end position="344"/>
    </location>
</feature>
<feature type="helix" evidence="14">
    <location>
        <begin position="347"/>
        <end position="349"/>
    </location>
</feature>
<feature type="helix" evidence="16">
    <location>
        <begin position="354"/>
        <end position="371"/>
    </location>
</feature>
<feature type="strand" evidence="16">
    <location>
        <begin position="376"/>
        <end position="379"/>
    </location>
</feature>
<feature type="helix" evidence="16">
    <location>
        <begin position="381"/>
        <end position="383"/>
    </location>
</feature>
<feature type="strand" evidence="16">
    <location>
        <begin position="390"/>
        <end position="392"/>
    </location>
</feature>
<feature type="strand" evidence="16">
    <location>
        <begin position="399"/>
        <end position="401"/>
    </location>
</feature>
<comment type="function">
    <text evidence="4 5">Catalyzes the conversion of 6-deoxyerythronolide B (6-DEB) to erythronolide B (EB) by the insertion of an oxygen at the 6S position of 6-DEB. Requires the participation of a ferredoxin and a ferredoxin reductase for the transfer of electrons from NADPH to the monooxygenase.</text>
</comment>
<comment type="catalytic activity">
    <reaction evidence="4 5">
        <text>6-deoxyerythronolide B + 2 reduced [2Fe-2S]-[ferredoxin] + O2 + 2 H(+) = erythronolide B + 2 oxidized [2Fe-2S]-[ferredoxin] + H2O</text>
        <dbReference type="Rhea" id="RHEA:40299"/>
        <dbReference type="Rhea" id="RHEA-COMP:10000"/>
        <dbReference type="Rhea" id="RHEA-COMP:10001"/>
        <dbReference type="ChEBI" id="CHEBI:15377"/>
        <dbReference type="ChEBI" id="CHEBI:15378"/>
        <dbReference type="ChEBI" id="CHEBI:15379"/>
        <dbReference type="ChEBI" id="CHEBI:16089"/>
        <dbReference type="ChEBI" id="CHEBI:27977"/>
        <dbReference type="ChEBI" id="CHEBI:33737"/>
        <dbReference type="ChEBI" id="CHEBI:33738"/>
        <dbReference type="EC" id="1.14.15.35"/>
    </reaction>
</comment>
<comment type="cofactor">
    <cofactor evidence="1 2 6">
        <name>heme</name>
        <dbReference type="ChEBI" id="CHEBI:30413"/>
    </cofactor>
</comment>
<comment type="pathway">
    <text evidence="4 5">Antibiotic biosynthesis; erythromycin biosynthesis.</text>
</comment>
<comment type="subcellular location">
    <subcellularLocation>
        <location evidence="12">Cytoplasm</location>
    </subcellularLocation>
</comment>
<comment type="disruption phenotype">
    <text evidence="5">Gene disruption leads to the accumulation of 6-deoxyerythromycin A, an antibiotic with increased stability at low pH.</text>
</comment>
<comment type="miscellaneous">
    <text evidence="3 6">The bound substrate forms no direct hydrogen bonds with the protein.</text>
</comment>
<comment type="similarity">
    <text evidence="11">Belongs to the cytochrome P450 family.</text>
</comment>
<sequence>MTTVPDLESDSFHVDWYRTYAELRETAPVTPVRFLGQDAWLVTGYDEAKAALSDLRLSSDPKKKYPGVEVEFPAYLGFPEDVRNYFATNMGTSDPPTHTRLRKLVSQEFTVRRVEAMRPRVEQITAELLDEVGDSGVVDIVDRFAHPLPIKVICELLGVDEKYRGEFGRWSSEILVMDPERAEQRGQAAREVVNFILDLVERRRTEPGDDLLSALIRVQDDDDGRLSADELTSIALVLLLAGFEASVSLIGIGTYLLLTHPDQLALVRRDPSALPNAVEEILRYIAPPETTTRFAAEEVEIGGVAIPQYSTVLVANGAANRDPKQFPDPHRFDVTRDTRGHLSFGQGIHFCMGRPLAKLEGEVALRALFGRFPALSLGIDADDVVWRRSLLLRGIDHLPVRLDG</sequence>
<gene>
    <name evidence="9" type="primary">eryF</name>
    <name type="synonym">CYP107A1</name>
    <name type="ordered locus">SACE_0730</name>
</gene>
<dbReference type="EC" id="1.14.15.35" evidence="4 5"/>
<dbReference type="EMBL" id="X60379">
    <property type="protein sequence ID" value="CAA42927.1"/>
    <property type="molecule type" value="Genomic_DNA"/>
</dbReference>
<dbReference type="EMBL" id="M54983">
    <property type="protein sequence ID" value="AAA26496.1"/>
    <property type="molecule type" value="Genomic_DNA"/>
</dbReference>
<dbReference type="EMBL" id="AM420293">
    <property type="protein sequence ID" value="CAM00071.1"/>
    <property type="molecule type" value="Genomic_DNA"/>
</dbReference>
<dbReference type="PIR" id="S18531">
    <property type="entry name" value="S18531"/>
</dbReference>
<dbReference type="RefSeq" id="WP_009950397.1">
    <property type="nucleotide sequence ID" value="NC_009142.1"/>
</dbReference>
<dbReference type="PDB" id="1EGY">
    <property type="method" value="X-ray"/>
    <property type="resolution" value="2.35 A"/>
    <property type="chains" value="A=3-404"/>
</dbReference>
<dbReference type="PDB" id="1EUP">
    <property type="method" value="X-ray"/>
    <property type="resolution" value="2.10 A"/>
    <property type="chains" value="A=3-404"/>
</dbReference>
<dbReference type="PDB" id="1JIN">
    <property type="method" value="X-ray"/>
    <property type="resolution" value="2.30 A"/>
    <property type="chains" value="A=3-404"/>
</dbReference>
<dbReference type="PDB" id="1JIO">
    <property type="method" value="X-ray"/>
    <property type="resolution" value="2.10 A"/>
    <property type="chains" value="A=2-404"/>
</dbReference>
<dbReference type="PDB" id="1JIP">
    <property type="method" value="X-ray"/>
    <property type="resolution" value="2.00 A"/>
    <property type="chains" value="A=2-404"/>
</dbReference>
<dbReference type="PDB" id="1OXA">
    <property type="method" value="X-ray"/>
    <property type="resolution" value="2.10 A"/>
    <property type="chains" value="A=3-404"/>
</dbReference>
<dbReference type="PDB" id="1Z8O">
    <property type="method" value="X-ray"/>
    <property type="resolution" value="1.70 A"/>
    <property type="chains" value="A=1-404"/>
</dbReference>
<dbReference type="PDB" id="1Z8P">
    <property type="method" value="X-ray"/>
    <property type="resolution" value="1.85 A"/>
    <property type="chains" value="A=1-404"/>
</dbReference>
<dbReference type="PDB" id="1Z8Q">
    <property type="method" value="X-ray"/>
    <property type="resolution" value="2.00 A"/>
    <property type="chains" value="A=1-404"/>
</dbReference>
<dbReference type="PDBsum" id="1EGY"/>
<dbReference type="PDBsum" id="1EUP"/>
<dbReference type="PDBsum" id="1JIN"/>
<dbReference type="PDBsum" id="1JIO"/>
<dbReference type="PDBsum" id="1JIP"/>
<dbReference type="PDBsum" id="1OXA"/>
<dbReference type="PDBsum" id="1Z8O"/>
<dbReference type="PDBsum" id="1Z8P"/>
<dbReference type="PDBsum" id="1Z8Q"/>
<dbReference type="SMR" id="Q00441"/>
<dbReference type="STRING" id="405948.SACE_0730"/>
<dbReference type="DrugBank" id="DB04070">
    <property type="generic name" value="6-Deoxyerythronolide B"/>
</dbReference>
<dbReference type="DrugBank" id="DB03369">
    <property type="generic name" value="9-Aminophenanthrene"/>
</dbReference>
<dbReference type="DrugBank" id="DB01536">
    <property type="generic name" value="Androstenedione"/>
</dbReference>
<dbReference type="KEGG" id="sen:SACE_0730"/>
<dbReference type="eggNOG" id="COG2124">
    <property type="taxonomic scope" value="Bacteria"/>
</dbReference>
<dbReference type="HOGENOM" id="CLU_033716_1_0_11"/>
<dbReference type="OrthoDB" id="142769at2"/>
<dbReference type="BRENDA" id="1.14.15.35">
    <property type="organism ID" value="5518"/>
</dbReference>
<dbReference type="UniPathway" id="UPA00240"/>
<dbReference type="EvolutionaryTrace" id="Q00441"/>
<dbReference type="Proteomes" id="UP000006728">
    <property type="component" value="Chromosome"/>
</dbReference>
<dbReference type="GO" id="GO:0005737">
    <property type="term" value="C:cytoplasm"/>
    <property type="evidence" value="ECO:0007669"/>
    <property type="project" value="UniProtKB-SubCell"/>
</dbReference>
<dbReference type="GO" id="GO:0020037">
    <property type="term" value="F:heme binding"/>
    <property type="evidence" value="ECO:0000314"/>
    <property type="project" value="UniProtKB"/>
</dbReference>
<dbReference type="GO" id="GO:0005506">
    <property type="term" value="F:iron ion binding"/>
    <property type="evidence" value="ECO:0000314"/>
    <property type="project" value="UniProtKB"/>
</dbReference>
<dbReference type="GO" id="GO:0004497">
    <property type="term" value="F:monooxygenase activity"/>
    <property type="evidence" value="ECO:0000314"/>
    <property type="project" value="UniProtKB"/>
</dbReference>
<dbReference type="GO" id="GO:0016705">
    <property type="term" value="F:oxidoreductase activity, acting on paired donors, with incorporation or reduction of molecular oxygen"/>
    <property type="evidence" value="ECO:0007669"/>
    <property type="project" value="InterPro"/>
</dbReference>
<dbReference type="GO" id="GO:1901115">
    <property type="term" value="P:erythromycin biosynthetic process"/>
    <property type="evidence" value="ECO:0000314"/>
    <property type="project" value="UniProtKB"/>
</dbReference>
<dbReference type="CDD" id="cd11029">
    <property type="entry name" value="CYP107-like"/>
    <property type="match status" value="1"/>
</dbReference>
<dbReference type="FunFam" id="1.10.630.10:FF:000018">
    <property type="entry name" value="Cytochrome P450 monooxygenase"/>
    <property type="match status" value="1"/>
</dbReference>
<dbReference type="Gene3D" id="1.10.630.10">
    <property type="entry name" value="Cytochrome P450"/>
    <property type="match status" value="1"/>
</dbReference>
<dbReference type="InterPro" id="IPR001128">
    <property type="entry name" value="Cyt_P450"/>
</dbReference>
<dbReference type="InterPro" id="IPR002397">
    <property type="entry name" value="Cyt_P450_B"/>
</dbReference>
<dbReference type="InterPro" id="IPR017972">
    <property type="entry name" value="Cyt_P450_CS"/>
</dbReference>
<dbReference type="InterPro" id="IPR036396">
    <property type="entry name" value="Cyt_P450_sf"/>
</dbReference>
<dbReference type="PANTHER" id="PTHR46696:SF1">
    <property type="entry name" value="CYTOCHROME P450 YJIB-RELATED"/>
    <property type="match status" value="1"/>
</dbReference>
<dbReference type="PANTHER" id="PTHR46696">
    <property type="entry name" value="P450, PUTATIVE (EUROFUNG)-RELATED"/>
    <property type="match status" value="1"/>
</dbReference>
<dbReference type="Pfam" id="PF00067">
    <property type="entry name" value="p450"/>
    <property type="match status" value="1"/>
</dbReference>
<dbReference type="PRINTS" id="PR00359">
    <property type="entry name" value="BP450"/>
</dbReference>
<dbReference type="SUPFAM" id="SSF48264">
    <property type="entry name" value="Cytochrome P450"/>
    <property type="match status" value="1"/>
</dbReference>
<dbReference type="PROSITE" id="PS00086">
    <property type="entry name" value="CYTOCHROME_P450"/>
    <property type="match status" value="1"/>
</dbReference>
<name>CPXJ_SACEN</name>
<reference key="1">
    <citation type="journal article" date="1991" name="Mol. Gen. Genet.">
        <title>Cloning and sequence analysis of genes involved in erythromycin biosynthesis in Saccharopolyspora erythraea: sequence similarities between EryG and a family of S-adenosylmethionine-dependent methyltransferases.</title>
        <authorList>
            <person name="Haydock S.F."/>
            <person name="Dowson J.A."/>
            <person name="Dhillon N."/>
            <person name="Roberts G.A."/>
            <person name="Cortes J."/>
            <person name="Leadlay P.F."/>
        </authorList>
    </citation>
    <scope>NUCLEOTIDE SEQUENCE [GENOMIC DNA]</scope>
</reference>
<reference key="2">
    <citation type="journal article" date="1991" name="Science">
        <title>An erythromycin derivative produced by targeted gene disruption in Saccharopolyspora erythraea.</title>
        <authorList>
            <person name="Weber J.M."/>
            <person name="Leung J.O."/>
            <person name="Swanson S.J."/>
            <person name="Idler K.B."/>
            <person name="McAlpine J.B."/>
        </authorList>
    </citation>
    <scope>NUCLEOTIDE SEQUENCE [GENOMIC DNA]</scope>
    <scope>FUNCTION</scope>
    <scope>CATALYTIC ACTIVITY</scope>
    <scope>DISRUPTION PHENOTYPE</scope>
    <scope>PATHWAY</scope>
</reference>
<reference key="3">
    <citation type="journal article" date="2007" name="Nat. Biotechnol.">
        <title>Complete genome sequence of the erythromycin-producing bacterium Saccharopolyspora erythraea NRRL23338.</title>
        <authorList>
            <person name="Oliynyk M."/>
            <person name="Samborskyy M."/>
            <person name="Lester J.B."/>
            <person name="Mironenko T."/>
            <person name="Scott N."/>
            <person name="Dickens S."/>
            <person name="Haydock S.F."/>
            <person name="Leadlay P.F."/>
        </authorList>
    </citation>
    <scope>NUCLEOTIDE SEQUENCE [LARGE SCALE GENOMIC DNA]</scope>
    <source>
        <strain>ATCC 11635 / DSM 40517 / JCM 4748 / NBRC 13426 / NCIMB 8594 / NRRL 2338</strain>
    </source>
</reference>
<reference key="4">
    <citation type="journal article" date="1992" name="J. Bacteriol.">
        <title>Characterization of Saccharopolyspora erythraea cytochrome P-450 genes and enzymes, including 6-deoxyerythronolide B hydroxylase.</title>
        <authorList>
            <person name="Andersen J.F."/>
            <person name="Hutchinson C.R."/>
        </authorList>
    </citation>
    <scope>FUNCTION</scope>
    <scope>CATALYTIC ACTIVITY</scope>
    <scope>PATHWAY</scope>
</reference>
<reference key="5">
    <citation type="journal article" date="1995" name="Nat. Struct. Biol.">
        <title>Structure of cytochrome P450eryF involved in erythromycin biosynthesis.</title>
        <authorList>
            <person name="Cupp-Vickery J.L."/>
            <person name="Poulos T.L."/>
        </authorList>
    </citation>
    <scope>X-RAY CRYSTALLOGRAPHY (2.10 ANGSTROMS) OF 3-404 IN COMPLEX WITH HEME AND 6-DEOXYERYTHRONOLIDE B</scope>
    <scope>COFACTOR</scope>
</reference>
<reference key="6">
    <citation type="journal article" date="2000" name="Proc. Natl. Acad. Sci. U.S.A.">
        <title>Crystal structures of ligand complexes of P450eryF exhibiting homotropic cooperativity.</title>
        <authorList>
            <person name="Cupp-Vickery J."/>
            <person name="Anderson R."/>
            <person name="Hatziris Z."/>
        </authorList>
    </citation>
    <scope>X-RAY CRYSTALLOGRAPHY (2.10 ANGSTROMS) OF 3-404 IN COMPLEX WITH HEME</scope>
    <scope>COFACTOR</scope>
</reference>
<reference key="7">
    <citation type="journal article" date="2001" name="J. Mol. Biol.">
        <title>Ketoconazole-induced conformational changes in the active site of cytochrome P450eryF.</title>
        <authorList>
            <person name="Cupp-Vickery J."/>
            <person name="Garcia C."/>
            <person name="Hofacre A."/>
            <person name="McGee-Estrada K."/>
        </authorList>
    </citation>
    <scope>X-RAY CRYSTALLOGRAPHY (2.00 ANGSTROMS) OF 2-404 IN COMPLEX WITH HEME</scope>
    <scope>COFACTOR</scope>
</reference>
<reference key="8">
    <citation type="journal article" date="2005" name="J. Biol. Chem.">
        <title>Crystal structures of the ferrous dioxygen complex of wild-type cytochrome P450eryF and its mutants, A245S and A245T: investigation of the proton transfer system in P450eryF.</title>
        <authorList>
            <person name="Nagano S."/>
            <person name="Cupp-Vickery J.R."/>
            <person name="Poulos T.L."/>
        </authorList>
    </citation>
    <scope>X-RAY CRYSTALLOGRAPHY (1.70 ANGSTROMS) IN COMPLEX WITH HEME AND 6-DEOXYERYTHRONOLIDE B</scope>
    <scope>COFACTOR</scope>
</reference>
<accession>Q00441</accession>
<accession>A4F7P7</accession>
<keyword id="KW-0002">3D-structure</keyword>
<keyword id="KW-0045">Antibiotic biosynthesis</keyword>
<keyword id="KW-0963">Cytoplasm</keyword>
<keyword id="KW-0349">Heme</keyword>
<keyword id="KW-0408">Iron</keyword>
<keyword id="KW-0479">Metal-binding</keyword>
<keyword id="KW-0503">Monooxygenase</keyword>
<keyword id="KW-0560">Oxidoreductase</keyword>
<keyword id="KW-1185">Reference proteome</keyword>
<proteinExistence type="evidence at protein level"/>